<dbReference type="EMBL" id="CP000449">
    <property type="protein sequence ID" value="ABI65121.1"/>
    <property type="molecule type" value="Genomic_DNA"/>
</dbReference>
<dbReference type="RefSeq" id="WP_011642768.1">
    <property type="nucleotide sequence ID" value="NC_008347.1"/>
</dbReference>
<dbReference type="SMR" id="Q0ARG6"/>
<dbReference type="STRING" id="394221.Mmar10_0828"/>
<dbReference type="KEGG" id="mmr:Mmar10_0828"/>
<dbReference type="eggNOG" id="COG3022">
    <property type="taxonomic scope" value="Bacteria"/>
</dbReference>
<dbReference type="HOGENOM" id="CLU_061989_0_0_5"/>
<dbReference type="OrthoDB" id="9777133at2"/>
<dbReference type="Proteomes" id="UP000001964">
    <property type="component" value="Chromosome"/>
</dbReference>
<dbReference type="GO" id="GO:0005829">
    <property type="term" value="C:cytosol"/>
    <property type="evidence" value="ECO:0007669"/>
    <property type="project" value="TreeGrafter"/>
</dbReference>
<dbReference type="GO" id="GO:0033194">
    <property type="term" value="P:response to hydroperoxide"/>
    <property type="evidence" value="ECO:0007669"/>
    <property type="project" value="TreeGrafter"/>
</dbReference>
<dbReference type="HAMAP" id="MF_00652">
    <property type="entry name" value="UPF0246"/>
    <property type="match status" value="1"/>
</dbReference>
<dbReference type="InterPro" id="IPR005583">
    <property type="entry name" value="YaaA"/>
</dbReference>
<dbReference type="NCBIfam" id="NF002542">
    <property type="entry name" value="PRK02101.1-3"/>
    <property type="match status" value="1"/>
</dbReference>
<dbReference type="PANTHER" id="PTHR30283:SF4">
    <property type="entry name" value="PEROXIDE STRESS RESISTANCE PROTEIN YAAA"/>
    <property type="match status" value="1"/>
</dbReference>
<dbReference type="PANTHER" id="PTHR30283">
    <property type="entry name" value="PEROXIDE STRESS RESPONSE PROTEIN YAAA"/>
    <property type="match status" value="1"/>
</dbReference>
<dbReference type="Pfam" id="PF03883">
    <property type="entry name" value="H2O2_YaaD"/>
    <property type="match status" value="1"/>
</dbReference>
<feature type="chain" id="PRO_0000262034" description="UPF0246 protein Mmar10_0828">
    <location>
        <begin position="1"/>
        <end position="263"/>
    </location>
</feature>
<accession>Q0ARG6</accession>
<sequence>MLILLSPAKNMNFDAVGRDLLATTPDLIGETRILSKTTRQLTAPKIKAMMKINDDLARLNRERFQAFDADQPGVKQAAFAFNGEVYRGLEAHTLSAEDLDWAQSHLRILSGMYGALKPLDAIHPYRLEMGRKLHTRRGESLYDFWGDRIAKELNGLQAEAAEPVILNLASNEYFKAVDRKALKGRVITATFKEEKDGQLRALMVFAKKARGMMARWAIENRITDPADLVKFDLGGYRFEAEGSSEGDLLFTRPQPAAAGKKAA</sequence>
<keyword id="KW-1185">Reference proteome</keyword>
<organism>
    <name type="scientific">Maricaulis maris (strain MCS10)</name>
    <name type="common">Caulobacter maris</name>
    <dbReference type="NCBI Taxonomy" id="394221"/>
    <lineage>
        <taxon>Bacteria</taxon>
        <taxon>Pseudomonadati</taxon>
        <taxon>Pseudomonadota</taxon>
        <taxon>Alphaproteobacteria</taxon>
        <taxon>Maricaulales</taxon>
        <taxon>Maricaulaceae</taxon>
        <taxon>Maricaulis</taxon>
    </lineage>
</organism>
<evidence type="ECO:0000255" key="1">
    <source>
        <dbReference type="HAMAP-Rule" id="MF_00652"/>
    </source>
</evidence>
<proteinExistence type="inferred from homology"/>
<reference key="1">
    <citation type="submission" date="2006-08" db="EMBL/GenBank/DDBJ databases">
        <title>Complete sequence of Maricaulis maris MCS10.</title>
        <authorList>
            <consortium name="US DOE Joint Genome Institute"/>
            <person name="Copeland A."/>
            <person name="Lucas S."/>
            <person name="Lapidus A."/>
            <person name="Barry K."/>
            <person name="Detter J.C."/>
            <person name="Glavina del Rio T."/>
            <person name="Hammon N."/>
            <person name="Israni S."/>
            <person name="Dalin E."/>
            <person name="Tice H."/>
            <person name="Pitluck S."/>
            <person name="Saunders E."/>
            <person name="Brettin T."/>
            <person name="Bruce D."/>
            <person name="Han C."/>
            <person name="Tapia R."/>
            <person name="Gilna P."/>
            <person name="Schmutz J."/>
            <person name="Larimer F."/>
            <person name="Land M."/>
            <person name="Hauser L."/>
            <person name="Kyrpides N."/>
            <person name="Mikhailova N."/>
            <person name="Viollier P."/>
            <person name="Stephens C."/>
            <person name="Richardson P."/>
        </authorList>
    </citation>
    <scope>NUCLEOTIDE SEQUENCE [LARGE SCALE GENOMIC DNA]</scope>
    <source>
        <strain>MCS10</strain>
    </source>
</reference>
<gene>
    <name type="ordered locus">Mmar10_0828</name>
</gene>
<protein>
    <recommendedName>
        <fullName evidence="1">UPF0246 protein Mmar10_0828</fullName>
    </recommendedName>
</protein>
<name>Y828_MARMM</name>
<comment type="similarity">
    <text evidence="1">Belongs to the UPF0246 family.</text>
</comment>